<reference evidence="16" key="1">
    <citation type="journal article" date="1997" name="Development">
        <title>SUP-17, a Caenorhabditis elegans ADAM protein related to Drosophila KUZBANIAN, and its role in LIN-12/NOTCH signalling.</title>
        <authorList>
            <person name="Wen C."/>
            <person name="Metzstein M.M."/>
            <person name="Greenwald I."/>
        </authorList>
    </citation>
    <scope>NUCLEOTIDE SEQUENCE [MRNA]</scope>
    <scope>FUNCTION</scope>
    <scope>MUTAGENESIS OF VAL-473</scope>
</reference>
<reference evidence="17" key="2">
    <citation type="journal article" date="1998" name="Science">
        <title>Genome sequence of the nematode C. elegans: a platform for investigating biology.</title>
        <authorList>
            <consortium name="The C. elegans sequencing consortium"/>
        </authorList>
    </citation>
    <scope>NUCLEOTIDE SEQUENCE [LARGE SCALE GENOMIC DNA]</scope>
    <source>
        <strain evidence="17">Bristol N2</strain>
    </source>
</reference>
<reference evidence="15" key="3">
    <citation type="journal article" date="1997" name="Genetics">
        <title>Identification and characterization of genes that interact with lin-12 in Caenorhabditis elegans.</title>
        <authorList>
            <person name="Tax F.E."/>
            <person name="Thomas J.H."/>
            <person name="Ferguson E.L."/>
            <person name="Horvitz H.R."/>
        </authorList>
    </citation>
    <scope>FUNCTION</scope>
    <scope>MUTAGENESIS OF ARG-181 AND VAL-473</scope>
</reference>
<reference evidence="15" key="4">
    <citation type="journal article" date="2005" name="Dev. Biol.">
        <title>Evidence for functional redundancy between C. elegans ADAM proteins SUP-17/Kuzbanian and ADM-4/TACE.</title>
        <authorList>
            <person name="Jarriault S."/>
            <person name="Greenwald I."/>
        </authorList>
    </citation>
    <scope>FUNCTION</scope>
    <scope>MUTAGENESIS OF VAL-473</scope>
    <scope>DISRUPTION PHENOTYPE</scope>
</reference>
<reference evidence="15" key="5">
    <citation type="journal article" date="2010" name="Genetics">
        <title>Genetics of extracellular matrix remodeling during organ growth using the Caenorhabditis elegans pharynx model.</title>
        <authorList>
            <person name="Jafari G."/>
            <person name="Burghoorn J."/>
            <person name="Kawano T."/>
            <person name="Mathew M."/>
            <person name="Moerck C."/>
            <person name="Axaeng C."/>
            <person name="Ailion M."/>
            <person name="Thomas J.H."/>
            <person name="Culotti J.G."/>
            <person name="Swoboda P."/>
            <person name="Pilon M."/>
        </authorList>
    </citation>
    <scope>MUTAGENESIS OF ARG-181 AND VAL-473</scope>
</reference>
<reference evidence="15" key="6">
    <citation type="journal article" date="2010" name="Proc. Natl. Acad. Sci. U.S.A.">
        <title>A conserved tetraspanin subfamily promotes Notch signaling in Caenorhabditis elegans and in human cells.</title>
        <authorList>
            <person name="Dunn C.D."/>
            <person name="Sulis M.L."/>
            <person name="Ferrando A.A."/>
            <person name="Greenwald I."/>
        </authorList>
    </citation>
    <scope>MUTAGENESIS OF VAL-473</scope>
</reference>
<reference evidence="15" key="7">
    <citation type="journal article" date="2016" name="Development">
        <title>EFN-4 functions in LAD-2-mediated axon guidance in Caenorhabditis elegans.</title>
        <authorList>
            <person name="Dong B."/>
            <person name="Moseley-Alldredge M."/>
            <person name="Schwieterman A.A."/>
            <person name="Donelson C.J."/>
            <person name="McMurry J.L."/>
            <person name="Hudson M.L."/>
            <person name="Chen L."/>
        </authorList>
    </citation>
    <scope>FUNCTION</scope>
    <scope>MUTAGENESIS OF ARG-181</scope>
</reference>
<reference evidence="15" key="8">
    <citation type="journal article" date="2017" name="PLoS Genet.">
        <title>Two paralogous tetraspanins TSP-12 and TSP-14 function with the ADAM10 metalloprotease SUP-17 to promote BMP signaling in caenorhabditis elegans.</title>
        <authorList>
            <person name="Wang L."/>
            <person name="Liu Z."/>
            <person name="Shi H."/>
            <person name="Liu J."/>
        </authorList>
    </citation>
    <scope>FUNCTION</scope>
    <scope>INTERACTION WITH TSP-12</scope>
    <scope>SUBCELLULAR LOCATION</scope>
    <scope>TISSUE SPECIFICITY</scope>
    <scope>DEVELOPMENTAL STAGE</scope>
    <scope>MUTAGENESIS OF ARG-181 AND VAL-473</scope>
</reference>
<proteinExistence type="evidence at protein level"/>
<accession>G5EFD9</accession>
<evidence type="ECO:0000250" key="1">
    <source>
        <dbReference type="UniProtKB" id="O14672"/>
    </source>
</evidence>
<evidence type="ECO:0000250" key="2">
    <source>
        <dbReference type="UniProtKB" id="P78325"/>
    </source>
</evidence>
<evidence type="ECO:0000250" key="3">
    <source>
        <dbReference type="UniProtKB" id="Q10741"/>
    </source>
</evidence>
<evidence type="ECO:0000255" key="4"/>
<evidence type="ECO:0000255" key="5">
    <source>
        <dbReference type="PROSITE-ProRule" id="PRU00068"/>
    </source>
</evidence>
<evidence type="ECO:0000255" key="6">
    <source>
        <dbReference type="PROSITE-ProRule" id="PRU00276"/>
    </source>
</evidence>
<evidence type="ECO:0000255" key="7">
    <source>
        <dbReference type="PROSITE-ProRule" id="PRU00498"/>
    </source>
</evidence>
<evidence type="ECO:0000256" key="8">
    <source>
        <dbReference type="SAM" id="MobiDB-lite"/>
    </source>
</evidence>
<evidence type="ECO:0000269" key="9">
    <source>
    </source>
</evidence>
<evidence type="ECO:0000269" key="10">
    <source>
    </source>
</evidence>
<evidence type="ECO:0000269" key="11">
    <source>
    </source>
</evidence>
<evidence type="ECO:0000269" key="12">
    <source>
    </source>
</evidence>
<evidence type="ECO:0000269" key="13">
    <source>
    </source>
</evidence>
<evidence type="ECO:0000269" key="14">
    <source>
    </source>
</evidence>
<evidence type="ECO:0000305" key="15"/>
<evidence type="ECO:0000312" key="16">
    <source>
        <dbReference type="EMBL" id="AAB97161.1"/>
    </source>
</evidence>
<evidence type="ECO:0000312" key="17">
    <source>
        <dbReference type="Proteomes" id="UP000001940"/>
    </source>
</evidence>
<evidence type="ECO:0000312" key="18">
    <source>
        <dbReference type="WormBase" id="DY3.7"/>
    </source>
</evidence>
<organism evidence="16">
    <name type="scientific">Caenorhabditis elegans</name>
    <dbReference type="NCBI Taxonomy" id="6239"/>
    <lineage>
        <taxon>Eukaryota</taxon>
        <taxon>Metazoa</taxon>
        <taxon>Ecdysozoa</taxon>
        <taxon>Nematoda</taxon>
        <taxon>Chromadorea</taxon>
        <taxon>Rhabditida</taxon>
        <taxon>Rhabditina</taxon>
        <taxon>Rhabditomorpha</taxon>
        <taxon>Rhabditoidea</taxon>
        <taxon>Rhabditidae</taxon>
        <taxon>Peloderinae</taxon>
        <taxon>Caenorhabditis</taxon>
    </lineage>
</organism>
<gene>
    <name evidence="18" type="primary">sup-17</name>
    <name evidence="18" type="ORF">DY3.7</name>
</gene>
<sequence>MSSPIRNRLQLVVTLIFCLFFENVNGLNNFIDNFETLNYRATHVANQVTRRKRSIDSAASHYQEPIGFRFNAYNRTFHVQLHPIDDSLFHEDHMSDVDGGYADIKPSHFLYEGYLKDDPNSHVHGSVFDGVFEGHIQTGEGRRYSIDKAAKYFERDDRPTQYHSIIYRDDEINHRKWRVKRDAENLSEQMQGCGFSSRVRREMTDVQNSGESTDFFTNYMTMGGRSKRANTLRDHDGLYFVRTCSLYMQADHKLYEHIRMKEGNNDPIRTREEIVSLFYNHIKAVNEIYEGTNFNGIKGLHFVIQRTSIYTPDSCDRGRAKTDSDNPFCEENVDVSNFLNLNSQRNHSAFCLAYALTFRDFVGGTLGLAWVASPQFNTAGGICQVHQRYNEGSRGWVYRSLNTGIVTLVNYGNRVPARVSQLTLAHEIGHNFGSPHDFPAECQPGLPDGNFIMFASATSGDKPNNGKFSPCSVKNISAVLAVVLKSMPVDPTRNASPVGIGKRNCFQERTSAFCGNQIYEPGEECDCGFSQADCDQMGDKCCVPHEARGNGGPGPCKRKPGAQCSPSQGYCCNPDTCSLHGKNEEKICRQESECSNLQTCDGRNAQCPVSPPKHDGIPCQDSTKVCSSGQCNGSVCAMFGLEDCFLTEGKADELCFLACIKDGKCTSSVHLPEFSANRTNFLQNMRKDKPGLILHPGSPCNNYKGYCDIFRKCRSVDANGPLARLKNLLFNKRTIETLTQWAQDNWWVVGVGGLVFLVIMALFVKCCAVHTPSTNPNKPPALNIYQTLTRPGTLIRQHRQRHRAAAGSVPPGPGAQPRSGAASAPSRTTPSARPSAPPLVAPQVAVAVPPGVVGPPIPLIATHPGSSSSTPAVIVLEPPPPYTAADPGSAMGGPRRGHRKNKRQTSSDAAGSSGNGGKKKGK</sequence>
<keyword id="KW-1003">Cell membrane</keyword>
<keyword id="KW-0165">Cleavage on pair of basic residues</keyword>
<keyword id="KW-0968">Cytoplasmic vesicle</keyword>
<keyword id="KW-1015">Disulfide bond</keyword>
<keyword id="KW-0325">Glycoprotein</keyword>
<keyword id="KW-0378">Hydrolase</keyword>
<keyword id="KW-0472">Membrane</keyword>
<keyword id="KW-0479">Metal-binding</keyword>
<keyword id="KW-0482">Metalloprotease</keyword>
<keyword id="KW-0645">Protease</keyword>
<keyword id="KW-1185">Reference proteome</keyword>
<keyword id="KW-0732">Signal</keyword>
<keyword id="KW-0812">Transmembrane</keyword>
<keyword id="KW-1133">Transmembrane helix</keyword>
<keyword id="KW-0862">Zinc</keyword>
<keyword id="KW-0865">Zymogen</keyword>
<dbReference type="EC" id="3.4.24.81" evidence="1"/>
<dbReference type="EMBL" id="AF024614">
    <property type="protein sequence ID" value="AAB97161.1"/>
    <property type="molecule type" value="mRNA"/>
</dbReference>
<dbReference type="EMBL" id="BX284601">
    <property type="protein sequence ID" value="CAB09416.1"/>
    <property type="molecule type" value="Genomic_DNA"/>
</dbReference>
<dbReference type="PIR" id="T37256">
    <property type="entry name" value="T37256"/>
</dbReference>
<dbReference type="RefSeq" id="NP_492377.1">
    <property type="nucleotide sequence ID" value="NM_059976.8"/>
</dbReference>
<dbReference type="SMR" id="G5EFD9"/>
<dbReference type="FunCoup" id="G5EFD9">
    <property type="interactions" value="3016"/>
</dbReference>
<dbReference type="IntAct" id="G5EFD9">
    <property type="interactions" value="1"/>
</dbReference>
<dbReference type="STRING" id="6239.DY3.7.1"/>
<dbReference type="MEROPS" id="M12.328"/>
<dbReference type="GlyCosmos" id="G5EFD9">
    <property type="glycosylation" value="6 sites, No reported glycans"/>
</dbReference>
<dbReference type="PaxDb" id="6239-DY3.7"/>
<dbReference type="PeptideAtlas" id="G5EFD9"/>
<dbReference type="EnsemblMetazoa" id="DY3.7.1">
    <property type="protein sequence ID" value="DY3.7.1"/>
    <property type="gene ID" value="WBGene00006324"/>
</dbReference>
<dbReference type="EnsemblMetazoa" id="DY3.7.2">
    <property type="protein sequence ID" value="DY3.7.2"/>
    <property type="gene ID" value="WBGene00006324"/>
</dbReference>
<dbReference type="GeneID" id="172689"/>
<dbReference type="KEGG" id="cel:CELE_DY3.7"/>
<dbReference type="AGR" id="WB:WBGene00006324"/>
<dbReference type="CTD" id="172689"/>
<dbReference type="WormBase" id="DY3.7">
    <property type="protein sequence ID" value="CE15751"/>
    <property type="gene ID" value="WBGene00006324"/>
    <property type="gene designation" value="sup-17"/>
</dbReference>
<dbReference type="eggNOG" id="KOG3658">
    <property type="taxonomic scope" value="Eukaryota"/>
</dbReference>
<dbReference type="GeneTree" id="ENSGT00940000167746"/>
<dbReference type="HOGENOM" id="CLU_004602_0_0_1"/>
<dbReference type="InParanoid" id="G5EFD9"/>
<dbReference type="OMA" id="MAVFIRC"/>
<dbReference type="OrthoDB" id="2149267at2759"/>
<dbReference type="PhylomeDB" id="G5EFD9"/>
<dbReference type="Reactome" id="R-CEL-381426">
    <property type="pathway name" value="Regulation of Insulin-like Growth Factor (IGF) transport and uptake by Insulin-like Growth Factor Binding Proteins (IGFBPs)"/>
</dbReference>
<dbReference type="Reactome" id="R-CEL-6798695">
    <property type="pathway name" value="Neutrophil degranulation"/>
</dbReference>
<dbReference type="Reactome" id="R-CEL-8957275">
    <property type="pathway name" value="Post-translational protein phosphorylation"/>
</dbReference>
<dbReference type="SignaLink" id="G5EFD9"/>
<dbReference type="PRO" id="PR:G5EFD9"/>
<dbReference type="Proteomes" id="UP000001940">
    <property type="component" value="Chromosome I"/>
</dbReference>
<dbReference type="Bgee" id="WBGene00006324">
    <property type="expression patterns" value="Expressed in germ line (C elegans) and 4 other cell types or tissues"/>
</dbReference>
<dbReference type="GO" id="GO:0016323">
    <property type="term" value="C:basolateral plasma membrane"/>
    <property type="evidence" value="ECO:0007669"/>
    <property type="project" value="UniProtKB-SubCell"/>
</dbReference>
<dbReference type="GO" id="GO:0030659">
    <property type="term" value="C:cytoplasmic vesicle membrane"/>
    <property type="evidence" value="ECO:0000314"/>
    <property type="project" value="UniProtKB"/>
</dbReference>
<dbReference type="GO" id="GO:0005886">
    <property type="term" value="C:plasma membrane"/>
    <property type="evidence" value="ECO:0000314"/>
    <property type="project" value="UniProtKB"/>
</dbReference>
<dbReference type="GO" id="GO:0046872">
    <property type="term" value="F:metal ion binding"/>
    <property type="evidence" value="ECO:0007669"/>
    <property type="project" value="UniProtKB-KW"/>
</dbReference>
<dbReference type="GO" id="GO:0004222">
    <property type="term" value="F:metalloendopeptidase activity"/>
    <property type="evidence" value="ECO:0000318"/>
    <property type="project" value="GO_Central"/>
</dbReference>
<dbReference type="GO" id="GO:0008237">
    <property type="term" value="F:metallopeptidase activity"/>
    <property type="evidence" value="ECO:0000250"/>
    <property type="project" value="WormBase"/>
</dbReference>
<dbReference type="GO" id="GO:0001708">
    <property type="term" value="P:cell fate specification"/>
    <property type="evidence" value="ECO:0000316"/>
    <property type="project" value="WormBase"/>
</dbReference>
<dbReference type="GO" id="GO:0009792">
    <property type="term" value="P:embryo development ending in birth or egg hatching"/>
    <property type="evidence" value="ECO:0000315"/>
    <property type="project" value="WormBase"/>
</dbReference>
<dbReference type="GO" id="GO:0006509">
    <property type="term" value="P:membrane protein ectodomain proteolysis"/>
    <property type="evidence" value="ECO:0000250"/>
    <property type="project" value="WormBase"/>
</dbReference>
<dbReference type="GO" id="GO:0045138">
    <property type="term" value="P:nematode male tail tip morphogenesis"/>
    <property type="evidence" value="ECO:0000315"/>
    <property type="project" value="UniProtKB"/>
</dbReference>
<dbReference type="GO" id="GO:0007219">
    <property type="term" value="P:Notch signaling pathway"/>
    <property type="evidence" value="ECO:0000316"/>
    <property type="project" value="WormBase"/>
</dbReference>
<dbReference type="GO" id="GO:0030511">
    <property type="term" value="P:positive regulation of transforming growth factor beta receptor signaling pathway"/>
    <property type="evidence" value="ECO:0000315"/>
    <property type="project" value="UniProtKB"/>
</dbReference>
<dbReference type="GO" id="GO:1902667">
    <property type="term" value="P:regulation of axon guidance"/>
    <property type="evidence" value="ECO:0000315"/>
    <property type="project" value="UniProtKB"/>
</dbReference>
<dbReference type="GO" id="GO:0042661">
    <property type="term" value="P:regulation of mesodermal cell fate specification"/>
    <property type="evidence" value="ECO:0000316"/>
    <property type="project" value="UniProtKB"/>
</dbReference>
<dbReference type="GO" id="GO:0040025">
    <property type="term" value="P:vulval development"/>
    <property type="evidence" value="ECO:0000316"/>
    <property type="project" value="WormBase"/>
</dbReference>
<dbReference type="CDD" id="cd04270">
    <property type="entry name" value="ZnMc_TACE_like"/>
    <property type="match status" value="1"/>
</dbReference>
<dbReference type="Gene3D" id="3.40.390.10">
    <property type="entry name" value="Collagenase (Catalytic Domain)"/>
    <property type="match status" value="1"/>
</dbReference>
<dbReference type="Gene3D" id="4.10.70.10">
    <property type="entry name" value="Disintegrin domain"/>
    <property type="match status" value="1"/>
</dbReference>
<dbReference type="InterPro" id="IPR034025">
    <property type="entry name" value="ADAM10_ADAM17"/>
</dbReference>
<dbReference type="InterPro" id="IPR049038">
    <property type="entry name" value="ADAM10_Cys-rich"/>
</dbReference>
<dbReference type="InterPro" id="IPR051489">
    <property type="entry name" value="ADAM_Metalloproteinase"/>
</dbReference>
<dbReference type="InterPro" id="IPR001762">
    <property type="entry name" value="Disintegrin_dom"/>
</dbReference>
<dbReference type="InterPro" id="IPR036436">
    <property type="entry name" value="Disintegrin_dom_sf"/>
</dbReference>
<dbReference type="InterPro" id="IPR024079">
    <property type="entry name" value="MetalloPept_cat_dom_sf"/>
</dbReference>
<dbReference type="InterPro" id="IPR001590">
    <property type="entry name" value="Peptidase_M12B"/>
</dbReference>
<dbReference type="PANTHER" id="PTHR45702">
    <property type="entry name" value="ADAM10/ADAM17 METALLOPEPTIDASE FAMILY MEMBER"/>
    <property type="match status" value="1"/>
</dbReference>
<dbReference type="PANTHER" id="PTHR45702:SF2">
    <property type="entry name" value="KUZBANIAN, ISOFORM A"/>
    <property type="match status" value="1"/>
</dbReference>
<dbReference type="Pfam" id="PF21299">
    <property type="entry name" value="ADAM10_Cys-rich"/>
    <property type="match status" value="1"/>
</dbReference>
<dbReference type="Pfam" id="PF13574">
    <property type="entry name" value="Reprolysin_2"/>
    <property type="match status" value="1"/>
</dbReference>
<dbReference type="SMART" id="SM00050">
    <property type="entry name" value="DISIN"/>
    <property type="match status" value="1"/>
</dbReference>
<dbReference type="SUPFAM" id="SSF57552">
    <property type="entry name" value="Blood coagulation inhibitor (disintegrin)"/>
    <property type="match status" value="1"/>
</dbReference>
<dbReference type="SUPFAM" id="SSF55486">
    <property type="entry name" value="Metalloproteases ('zincins'), catalytic domain"/>
    <property type="match status" value="1"/>
</dbReference>
<dbReference type="PROSITE" id="PS50215">
    <property type="entry name" value="ADAM_MEPRO"/>
    <property type="match status" value="1"/>
</dbReference>
<dbReference type="PROSITE" id="PS50214">
    <property type="entry name" value="DISINTEGRIN_2"/>
    <property type="match status" value="1"/>
</dbReference>
<dbReference type="PROSITE" id="PS00142">
    <property type="entry name" value="ZINC_PROTEASE"/>
    <property type="match status" value="1"/>
</dbReference>
<protein>
    <recommendedName>
        <fullName evidence="15">Disintegrin and metalloproteinase domain-containing protein 10 homolog</fullName>
        <shortName evidence="15">ADAM 10 homolog</shortName>
        <ecNumber evidence="1">3.4.24.81</ecNumber>
    </recommendedName>
</protein>
<feature type="signal peptide" evidence="4">
    <location>
        <begin position="1"/>
        <end position="26"/>
    </location>
</feature>
<feature type="propeptide" id="PRO_0000441398" evidence="3">
    <location>
        <begin position="27"/>
        <end position="228"/>
    </location>
</feature>
<feature type="chain" id="PRO_5010117176" description="Disintegrin and metalloproteinase domain-containing protein 10 homolog" evidence="4">
    <location>
        <begin position="229"/>
        <end position="922"/>
    </location>
</feature>
<feature type="topological domain" description="Extracellular" evidence="15">
    <location>
        <begin position="229"/>
        <end position="745"/>
    </location>
</feature>
<feature type="transmembrane region" description="Helical" evidence="4">
    <location>
        <begin position="746"/>
        <end position="766"/>
    </location>
</feature>
<feature type="topological domain" description="Cytoplasmic" evidence="15">
    <location>
        <begin position="767"/>
        <end position="922"/>
    </location>
</feature>
<feature type="domain" description="Peptidase M12B" evidence="6">
    <location>
        <begin position="242"/>
        <end position="480"/>
    </location>
</feature>
<feature type="domain" description="Disintegrin" evidence="5">
    <location>
        <begin position="511"/>
        <end position="615"/>
    </location>
</feature>
<feature type="region of interest" description="Disordered" evidence="8">
    <location>
        <begin position="797"/>
        <end position="837"/>
    </location>
</feature>
<feature type="region of interest" description="Disordered" evidence="8">
    <location>
        <begin position="864"/>
        <end position="922"/>
    </location>
</feature>
<feature type="compositionally biased region" description="Low complexity" evidence="8">
    <location>
        <begin position="805"/>
        <end position="834"/>
    </location>
</feature>
<feature type="active site" evidence="6">
    <location>
        <position position="427"/>
    </location>
</feature>
<feature type="binding site" evidence="6">
    <location>
        <position position="426"/>
    </location>
    <ligand>
        <name>Zn(2+)</name>
        <dbReference type="ChEBI" id="CHEBI:29105"/>
        <note>catalytic</note>
    </ligand>
</feature>
<feature type="binding site" evidence="6">
    <location>
        <position position="430"/>
    </location>
    <ligand>
        <name>Zn(2+)</name>
        <dbReference type="ChEBI" id="CHEBI:29105"/>
        <note>catalytic</note>
    </ligand>
</feature>
<feature type="binding site" evidence="6">
    <location>
        <position position="436"/>
    </location>
    <ligand>
        <name>Zn(2+)</name>
        <dbReference type="ChEBI" id="CHEBI:29105"/>
        <note>catalytic</note>
    </ligand>
</feature>
<feature type="glycosylation site" description="N-linked (GlcNAc...) asparagine" evidence="7">
    <location>
        <position position="74"/>
    </location>
</feature>
<feature type="glycosylation site" description="N-linked (GlcNAc...) asparagine" evidence="7">
    <location>
        <position position="185"/>
    </location>
</feature>
<feature type="glycosylation site" description="N-linked (GlcNAc...) asparagine" evidence="7">
    <location>
        <position position="346"/>
    </location>
</feature>
<feature type="glycosylation site" description="N-linked (GlcNAc...) asparagine" evidence="7">
    <location>
        <position position="475"/>
    </location>
</feature>
<feature type="glycosylation site" description="N-linked (GlcNAc...) asparagine" evidence="7">
    <location>
        <position position="632"/>
    </location>
</feature>
<feature type="glycosylation site" description="N-linked (GlcNAc...) asparagine" evidence="7">
    <location>
        <position position="677"/>
    </location>
</feature>
<feature type="disulfide bond" evidence="6">
    <location>
        <begin position="442"/>
        <end position="471"/>
    </location>
</feature>
<feature type="disulfide bond" evidence="3">
    <location>
        <begin position="542"/>
        <end position="577"/>
    </location>
</feature>
<feature type="disulfide bond" evidence="3">
    <location>
        <begin position="564"/>
        <end position="572"/>
    </location>
</feature>
<feature type="disulfide bond" evidence="5">
    <location>
        <begin position="588"/>
        <end position="607"/>
    </location>
</feature>
<feature type="disulfide bond" evidence="3">
    <location>
        <begin position="594"/>
        <end position="626"/>
    </location>
</feature>
<feature type="disulfide bond" evidence="3">
    <location>
        <begin position="619"/>
        <end position="631"/>
    </location>
</feature>
<feature type="disulfide bond" evidence="3">
    <location>
        <begin position="636"/>
        <end position="659"/>
    </location>
</feature>
<feature type="disulfide bond" evidence="3">
    <location>
        <begin position="644"/>
        <end position="665"/>
    </location>
</feature>
<feature type="disulfide bond" evidence="3">
    <location>
        <begin position="655"/>
        <end position="707"/>
    </location>
</feature>
<feature type="disulfide bond" evidence="3">
    <location>
        <begin position="700"/>
        <end position="713"/>
    </location>
</feature>
<feature type="mutagenesis site" description="In n316; reduced body length. Reduced axon migration of SDQL neuron. No pharyngeal defects. In a sma-9 (cc604) mutant background, partially restores the production of the 2 M lineage-derived coelomocytes. In a lin-12 (n952) mutant background, restores egg-laying functions. In a glp-1 (e2141) mutant background, results in sterility in 18 percent adults." evidence="10 11 12 13">
    <original>R</original>
    <variation>K</variation>
    <location>
        <position position="181"/>
    </location>
</feature>
<feature type="mutagenesis site" description="In n1258; reduced body length. Vulva precursor cells P(5-7).p fail to acquire a secondary cell fate. Males have severe tail patterning defects including shortened and fused rays, smaller fans and crumpled spicules. 13 percent of animals display a twisted pharynx. In a sma-9 (cc604) mutant background, partially restores the production of the 2 M lineage-derived coelomocytes. In a glp-1 (e2141) mutant background, results in 22 percent embryonic lethality and sterility in 30 percent of surviving adults. In a lin-12 (n137) mutant background, prevents the formation of an ectopic pseudovulva. In a lin-12 (ar170) mutant background, enhances the number of adults with 2 anchor cells. In a adm-4 (ok265) mutant background, causes sterility with abnormal oocytes containing endoreduplicated DNA and impaired spermatheca function, and production of 2 anchor cells. In a tsp-12 (ok239) mutant background, causes lethality at various developmental stages." evidence="9 10 12 13 14">
    <original>V</original>
    <variation>D</variation>
    <location>
        <position position="473"/>
    </location>
</feature>
<comment type="function">
    <text evidence="1 9 11 12 13 14">Metalloprotease (By similarity). Acts together with protease adm-4 and in a cell autonomous manner to facilitate lin-12/Notch signaling during developmental cell fate decision, including anchor cell/ventral uterine precursor cell decision and vulva precursor cell specification (PubMed:16197940, PubMed:9409830, PubMed:9428412). By modulating glp-1/Notch signaling, plays a role in germline development (PubMed:16197940). Probably by modulating BMP-like Sma/Mab signaling via the shedding of unc-40 ectodomain, involved in the regulation of body size and mesoderm development (PubMed:28068334). Probably by shedding ephrin efn-4, regulates axon guidance of SDQL neuron during development (PubMed:26903502).</text>
</comment>
<comment type="catalytic activity">
    <reaction evidence="1">
        <text>Endopeptidase of broad specificity.</text>
        <dbReference type="EC" id="3.4.24.81"/>
    </reaction>
</comment>
<comment type="cofactor">
    <cofactor evidence="2">
        <name>Zn(2+)</name>
        <dbReference type="ChEBI" id="CHEBI:29105"/>
    </cofactor>
    <text evidence="2">Binds 1 zinc ion per subunit.</text>
</comment>
<comment type="subunit">
    <text evidence="12">May interact with tetraspanin tsp-12; the interaction promotes sup-17 cell membrane localization.</text>
</comment>
<comment type="subcellular location">
    <subcellularLocation>
        <location evidence="12">Cell membrane</location>
        <topology evidence="15">Single-pass type I membrane protein</topology>
    </subcellularLocation>
    <subcellularLocation>
        <location evidence="12">Basolateral cell membrane</location>
        <topology evidence="15">Single-pass type I membrane protein</topology>
    </subcellularLocation>
    <subcellularLocation>
        <location evidence="12">Cytoplasmic vesicle membrane</location>
        <topology evidence="15">Single-pass type I membrane protein</topology>
    </subcellularLocation>
    <text evidence="12">Localizes to the basolateral cell membrane in embryos.</text>
</comment>
<comment type="tissue specificity">
    <text evidence="12">Expressed in the germline.</text>
</comment>
<comment type="developmental stage">
    <text evidence="12">Expressed in embryos, larvae and in adults. Expressed in the developing vulva at the L4 larval stage and in the hypodermis at the L3 larval stage.</text>
</comment>
<comment type="disruption phenotype">
    <text evidence="9">RNAi-mediated knockdown in a glp-1 (ar202) constitutively active mutant background restores fertility.</text>
</comment>
<name>ADA10_CAEEL</name>